<dbReference type="ArachnoServer" id="AS000125">
    <property type="toxin name" value="U1-segestritoxin-Sf1a"/>
</dbReference>
<dbReference type="GO" id="GO:0005576">
    <property type="term" value="C:extracellular region"/>
    <property type="evidence" value="ECO:0007669"/>
    <property type="project" value="UniProtKB-SubCell"/>
</dbReference>
<dbReference type="GO" id="GO:0090729">
    <property type="term" value="F:toxin activity"/>
    <property type="evidence" value="ECO:0007669"/>
    <property type="project" value="UniProtKB-KW"/>
</dbReference>
<dbReference type="Gene3D" id="4.10.40.60">
    <property type="match status" value="1"/>
</dbReference>
<dbReference type="InterPro" id="IPR053718">
    <property type="entry name" value="Insecticidal_knottin-like_sf"/>
</dbReference>
<dbReference type="InterPro" id="IPR012633">
    <property type="entry name" value="Toxin_28"/>
</dbReference>
<dbReference type="Pfam" id="PF08115">
    <property type="entry name" value="Toxin_28"/>
    <property type="match status" value="1"/>
</dbReference>
<accession>P61504</accession>
<keyword id="KW-0903">Direct protein sequencing</keyword>
<keyword id="KW-1015">Disulfide bond</keyword>
<keyword id="KW-0964">Secreted</keyword>
<keyword id="KW-0800">Toxin</keyword>
<evidence type="ECO:0000250" key="1">
    <source>
        <dbReference type="UniProtKB" id="P61095"/>
    </source>
</evidence>
<evidence type="ECO:0000269" key="2">
    <source>
    </source>
</evidence>
<evidence type="ECO:0000303" key="3">
    <source>
    </source>
</evidence>
<evidence type="ECO:0000305" key="4"/>
<evidence type="ECO:0000305" key="5">
    <source>
    </source>
</evidence>
<protein>
    <recommendedName>
        <fullName evidence="4">U1-segestritoxin-Sf1a</fullName>
        <shortName evidence="4">U1-SGTX-Sf1a</shortName>
    </recommendedName>
    <alternativeName>
        <fullName evidence="3">Insectotoxin SIT</fullName>
    </alternativeName>
</protein>
<organism>
    <name type="scientific">Segestria florentina</name>
    <name type="common">Tube-web spider</name>
    <name type="synonym">Segestria gracilis</name>
    <dbReference type="NCBI Taxonomy" id="31925"/>
    <lineage>
        <taxon>Eukaryota</taxon>
        <taxon>Metazoa</taxon>
        <taxon>Ecdysozoa</taxon>
        <taxon>Arthropoda</taxon>
        <taxon>Chelicerata</taxon>
        <taxon>Arachnida</taxon>
        <taxon>Araneae</taxon>
        <taxon>Araneomorphae</taxon>
        <taxon>Haplogynae</taxon>
        <taxon>Dysderoidea</taxon>
        <taxon>Segestriidae</taxon>
        <taxon>Segestria</taxon>
    </lineage>
</organism>
<feature type="peptide" id="PRO_0000044967" description="U1-segestritoxin-Sf1a" evidence="2">
    <location>
        <begin position="1"/>
        <end position="35"/>
    </location>
</feature>
<feature type="region of interest" description="Keys region for toxin activity" evidence="1">
    <location>
        <begin position="31"/>
        <end position="33"/>
    </location>
</feature>
<feature type="disulfide bond" evidence="1">
    <location>
        <begin position="10"/>
        <end position="22"/>
    </location>
</feature>
<feature type="disulfide bond" evidence="4">
    <location>
        <begin position="17"/>
        <end position="28"/>
    </location>
</feature>
<comment type="function">
    <text evidence="2">Insecticidal toxin.</text>
</comment>
<comment type="subcellular location">
    <subcellularLocation>
        <location evidence="2">Secreted</location>
    </subcellularLocation>
</comment>
<comment type="tissue specificity">
    <text evidence="5">Expressed by the venom gland.</text>
</comment>
<comment type="similarity">
    <text evidence="4">Belongs to the neurotoxin 16 (SFI) family.</text>
</comment>
<name>SIT_SEGFL</name>
<sequence>RQDMVDESVCYITDNNCNGGKCLRSKACHADPWEL</sequence>
<proteinExistence type="evidence at protein level"/>
<reference key="1">
    <citation type="journal article" date="1987" name="Bioorg. Khim.">
        <title>Toxic components of the venom of the cellar spider Segestria florentina.</title>
        <authorList>
            <person name="Sagdiev N.Z."/>
            <person name="Valieva L.A."/>
            <person name="Korneev A.S."/>
            <person name="Sadykov A.A."/>
            <person name="Salikhov S.I."/>
        </authorList>
    </citation>
    <scope>PROTEIN SEQUENCE</scope>
    <scope>FUNCTION</scope>
    <scope>SUBCELLULAR LOCATION</scope>
    <source>
        <tissue>Venom</tissue>
    </source>
</reference>